<dbReference type="EMBL" id="CP000312">
    <property type="protein sequence ID" value="ABG85970.1"/>
    <property type="molecule type" value="Genomic_DNA"/>
</dbReference>
<dbReference type="RefSeq" id="WP_011593135.1">
    <property type="nucleotide sequence ID" value="NC_008262.1"/>
</dbReference>
<dbReference type="SMR" id="Q0SQF3"/>
<dbReference type="KEGG" id="cpr:CPR_2390"/>
<dbReference type="Proteomes" id="UP000001824">
    <property type="component" value="Chromosome"/>
</dbReference>
<dbReference type="GO" id="GO:0022627">
    <property type="term" value="C:cytosolic small ribosomal subunit"/>
    <property type="evidence" value="ECO:0007669"/>
    <property type="project" value="TreeGrafter"/>
</dbReference>
<dbReference type="GO" id="GO:0019843">
    <property type="term" value="F:rRNA binding"/>
    <property type="evidence" value="ECO:0007669"/>
    <property type="project" value="UniProtKB-UniRule"/>
</dbReference>
<dbReference type="GO" id="GO:0003735">
    <property type="term" value="F:structural constituent of ribosome"/>
    <property type="evidence" value="ECO:0007669"/>
    <property type="project" value="InterPro"/>
</dbReference>
<dbReference type="GO" id="GO:0006412">
    <property type="term" value="P:translation"/>
    <property type="evidence" value="ECO:0007669"/>
    <property type="project" value="UniProtKB-UniRule"/>
</dbReference>
<dbReference type="CDD" id="cd00364">
    <property type="entry name" value="Ribosomal_uS17"/>
    <property type="match status" value="1"/>
</dbReference>
<dbReference type="FunFam" id="2.40.50.140:FF:000026">
    <property type="entry name" value="30S ribosomal protein S17"/>
    <property type="match status" value="1"/>
</dbReference>
<dbReference type="Gene3D" id="2.40.50.140">
    <property type="entry name" value="Nucleic acid-binding proteins"/>
    <property type="match status" value="1"/>
</dbReference>
<dbReference type="HAMAP" id="MF_01345_B">
    <property type="entry name" value="Ribosomal_uS17_B"/>
    <property type="match status" value="1"/>
</dbReference>
<dbReference type="InterPro" id="IPR012340">
    <property type="entry name" value="NA-bd_OB-fold"/>
</dbReference>
<dbReference type="InterPro" id="IPR000266">
    <property type="entry name" value="Ribosomal_uS17"/>
</dbReference>
<dbReference type="InterPro" id="IPR019984">
    <property type="entry name" value="Ribosomal_uS17_bact/chlr"/>
</dbReference>
<dbReference type="InterPro" id="IPR019979">
    <property type="entry name" value="Ribosomal_uS17_CS"/>
</dbReference>
<dbReference type="NCBIfam" id="NF004123">
    <property type="entry name" value="PRK05610.1"/>
    <property type="match status" value="1"/>
</dbReference>
<dbReference type="NCBIfam" id="TIGR03635">
    <property type="entry name" value="uS17_bact"/>
    <property type="match status" value="1"/>
</dbReference>
<dbReference type="PANTHER" id="PTHR10744">
    <property type="entry name" value="40S RIBOSOMAL PROTEIN S11 FAMILY MEMBER"/>
    <property type="match status" value="1"/>
</dbReference>
<dbReference type="PANTHER" id="PTHR10744:SF1">
    <property type="entry name" value="SMALL RIBOSOMAL SUBUNIT PROTEIN US17M"/>
    <property type="match status" value="1"/>
</dbReference>
<dbReference type="Pfam" id="PF00366">
    <property type="entry name" value="Ribosomal_S17"/>
    <property type="match status" value="1"/>
</dbReference>
<dbReference type="PRINTS" id="PR00973">
    <property type="entry name" value="RIBOSOMALS17"/>
</dbReference>
<dbReference type="SUPFAM" id="SSF50249">
    <property type="entry name" value="Nucleic acid-binding proteins"/>
    <property type="match status" value="1"/>
</dbReference>
<dbReference type="PROSITE" id="PS00056">
    <property type="entry name" value="RIBOSOMAL_S17"/>
    <property type="match status" value="1"/>
</dbReference>
<keyword id="KW-0687">Ribonucleoprotein</keyword>
<keyword id="KW-0689">Ribosomal protein</keyword>
<keyword id="KW-0694">RNA-binding</keyword>
<keyword id="KW-0699">rRNA-binding</keyword>
<proteinExistence type="inferred from homology"/>
<comment type="function">
    <text evidence="1">One of the primary rRNA binding proteins, it binds specifically to the 5'-end of 16S ribosomal RNA.</text>
</comment>
<comment type="subunit">
    <text evidence="1">Part of the 30S ribosomal subunit.</text>
</comment>
<comment type="similarity">
    <text evidence="1">Belongs to the universal ribosomal protein uS17 family.</text>
</comment>
<protein>
    <recommendedName>
        <fullName evidence="1">Small ribosomal subunit protein uS17</fullName>
    </recommendedName>
    <alternativeName>
        <fullName evidence="2">30S ribosomal protein S17</fullName>
    </alternativeName>
</protein>
<sequence length="84" mass="9996">MERNLRKKRLGRVVSDKMDKTIVVAVETKVRHPLYGKTVNRTTKFKAHDENNEARFGDRVFIMETRPLSKDKRWRLVEIVEKAK</sequence>
<evidence type="ECO:0000255" key="1">
    <source>
        <dbReference type="HAMAP-Rule" id="MF_01345"/>
    </source>
</evidence>
<evidence type="ECO:0000305" key="2"/>
<accession>Q0SQF3</accession>
<name>RS17_CLOPS</name>
<organism>
    <name type="scientific">Clostridium perfringens (strain SM101 / Type A)</name>
    <dbReference type="NCBI Taxonomy" id="289380"/>
    <lineage>
        <taxon>Bacteria</taxon>
        <taxon>Bacillati</taxon>
        <taxon>Bacillota</taxon>
        <taxon>Clostridia</taxon>
        <taxon>Eubacteriales</taxon>
        <taxon>Clostridiaceae</taxon>
        <taxon>Clostridium</taxon>
    </lineage>
</organism>
<reference key="1">
    <citation type="journal article" date="2006" name="Genome Res.">
        <title>Skewed genomic variability in strains of the toxigenic bacterial pathogen, Clostridium perfringens.</title>
        <authorList>
            <person name="Myers G.S.A."/>
            <person name="Rasko D.A."/>
            <person name="Cheung J.K."/>
            <person name="Ravel J."/>
            <person name="Seshadri R."/>
            <person name="DeBoy R.T."/>
            <person name="Ren Q."/>
            <person name="Varga J."/>
            <person name="Awad M.M."/>
            <person name="Brinkac L.M."/>
            <person name="Daugherty S.C."/>
            <person name="Haft D.H."/>
            <person name="Dodson R.J."/>
            <person name="Madupu R."/>
            <person name="Nelson W.C."/>
            <person name="Rosovitz M.J."/>
            <person name="Sullivan S.A."/>
            <person name="Khouri H."/>
            <person name="Dimitrov G.I."/>
            <person name="Watkins K.L."/>
            <person name="Mulligan S."/>
            <person name="Benton J."/>
            <person name="Radune D."/>
            <person name="Fisher D.J."/>
            <person name="Atkins H.S."/>
            <person name="Hiscox T."/>
            <person name="Jost B.H."/>
            <person name="Billington S.J."/>
            <person name="Songer J.G."/>
            <person name="McClane B.A."/>
            <person name="Titball R.W."/>
            <person name="Rood J.I."/>
            <person name="Melville S.B."/>
            <person name="Paulsen I.T."/>
        </authorList>
    </citation>
    <scope>NUCLEOTIDE SEQUENCE [LARGE SCALE GENOMIC DNA]</scope>
    <source>
        <strain>SM101 / Type A</strain>
    </source>
</reference>
<gene>
    <name evidence="1" type="primary">rpsQ</name>
    <name type="ordered locus">CPR_2390</name>
</gene>
<feature type="chain" id="PRO_1000054944" description="Small ribosomal subunit protein uS17">
    <location>
        <begin position="1"/>
        <end position="84"/>
    </location>
</feature>